<keyword id="KW-0067">ATP-binding</keyword>
<keyword id="KW-0963">Cytoplasm</keyword>
<keyword id="KW-0235">DNA replication</keyword>
<keyword id="KW-0238">DNA-binding</keyword>
<keyword id="KW-0446">Lipid-binding</keyword>
<keyword id="KW-0547">Nucleotide-binding</keyword>
<gene>
    <name evidence="1" type="primary">dnaA</name>
    <name type="ordered locus">BF3825</name>
</gene>
<reference key="1">
    <citation type="journal article" date="2004" name="Proc. Natl. Acad. Sci. U.S.A.">
        <title>Genomic analysis of Bacteroides fragilis reveals extensive DNA inversions regulating cell surface adaptation.</title>
        <authorList>
            <person name="Kuwahara T."/>
            <person name="Yamashita A."/>
            <person name="Hirakawa H."/>
            <person name="Nakayama H."/>
            <person name="Toh H."/>
            <person name="Okada N."/>
            <person name="Kuhara S."/>
            <person name="Hattori M."/>
            <person name="Hayashi T."/>
            <person name="Ohnishi Y."/>
        </authorList>
    </citation>
    <scope>NUCLEOTIDE SEQUENCE [LARGE SCALE GENOMIC DNA]</scope>
    <source>
        <strain>YCH46</strain>
    </source>
</reference>
<protein>
    <recommendedName>
        <fullName evidence="1">Chromosomal replication initiator protein DnaA</fullName>
    </recommendedName>
</protein>
<comment type="function">
    <text evidence="1">Plays an essential role in the initiation and regulation of chromosomal replication. ATP-DnaA binds to the origin of replication (oriC) to initiate formation of the DNA replication initiation complex once per cell cycle. Binds the DnaA box (a 9 base pair repeat at the origin) and separates the double-stranded (ds)DNA. Forms a right-handed helical filament on oriC DNA; dsDNA binds to the exterior of the filament while single-stranded (ss)DNA is stabiized in the filament's interior. The ATP-DnaA-oriC complex binds and stabilizes one strand of the AT-rich DNA unwinding element (DUE), permitting loading of DNA polymerase. After initiation quickly degrades to an ADP-DnaA complex that is not apt for DNA replication. Binds acidic phospholipids.</text>
</comment>
<comment type="subunit">
    <text evidence="1">Oligomerizes as a right-handed, spiral filament on DNA at oriC.</text>
</comment>
<comment type="subcellular location">
    <subcellularLocation>
        <location evidence="1">Cytoplasm</location>
    </subcellularLocation>
</comment>
<comment type="domain">
    <text evidence="1">Domain I is involved in oligomerization and binding regulators, domain II is flexibile and of varying length in different bacteria, domain III forms the AAA+ region, while domain IV binds dsDNA.</text>
</comment>
<comment type="similarity">
    <text evidence="1">Belongs to the DnaA family.</text>
</comment>
<dbReference type="EMBL" id="AP006841">
    <property type="protein sequence ID" value="BAD50567.1"/>
    <property type="molecule type" value="Genomic_DNA"/>
</dbReference>
<dbReference type="RefSeq" id="WP_005798188.1">
    <property type="nucleotide sequence ID" value="NC_006347.1"/>
</dbReference>
<dbReference type="RefSeq" id="YP_101101.1">
    <property type="nucleotide sequence ID" value="NC_006347.1"/>
</dbReference>
<dbReference type="SMR" id="Q64PL4"/>
<dbReference type="STRING" id="295405.BF3825"/>
<dbReference type="GeneID" id="60365684"/>
<dbReference type="KEGG" id="bfr:BF3825"/>
<dbReference type="PATRIC" id="fig|295405.11.peg.3673"/>
<dbReference type="HOGENOM" id="CLU_026910_3_0_10"/>
<dbReference type="OrthoDB" id="9807019at2"/>
<dbReference type="Proteomes" id="UP000002197">
    <property type="component" value="Chromosome"/>
</dbReference>
<dbReference type="GO" id="GO:0005737">
    <property type="term" value="C:cytoplasm"/>
    <property type="evidence" value="ECO:0007669"/>
    <property type="project" value="UniProtKB-SubCell"/>
</dbReference>
<dbReference type="GO" id="GO:0005886">
    <property type="term" value="C:plasma membrane"/>
    <property type="evidence" value="ECO:0007669"/>
    <property type="project" value="TreeGrafter"/>
</dbReference>
<dbReference type="GO" id="GO:0005524">
    <property type="term" value="F:ATP binding"/>
    <property type="evidence" value="ECO:0007669"/>
    <property type="project" value="UniProtKB-UniRule"/>
</dbReference>
<dbReference type="GO" id="GO:0016887">
    <property type="term" value="F:ATP hydrolysis activity"/>
    <property type="evidence" value="ECO:0007669"/>
    <property type="project" value="InterPro"/>
</dbReference>
<dbReference type="GO" id="GO:0003688">
    <property type="term" value="F:DNA replication origin binding"/>
    <property type="evidence" value="ECO:0007669"/>
    <property type="project" value="UniProtKB-UniRule"/>
</dbReference>
<dbReference type="GO" id="GO:0008289">
    <property type="term" value="F:lipid binding"/>
    <property type="evidence" value="ECO:0007669"/>
    <property type="project" value="UniProtKB-KW"/>
</dbReference>
<dbReference type="GO" id="GO:0006270">
    <property type="term" value="P:DNA replication initiation"/>
    <property type="evidence" value="ECO:0007669"/>
    <property type="project" value="UniProtKB-UniRule"/>
</dbReference>
<dbReference type="GO" id="GO:0006275">
    <property type="term" value="P:regulation of DNA replication"/>
    <property type="evidence" value="ECO:0007669"/>
    <property type="project" value="UniProtKB-UniRule"/>
</dbReference>
<dbReference type="CDD" id="cd00009">
    <property type="entry name" value="AAA"/>
    <property type="match status" value="1"/>
</dbReference>
<dbReference type="CDD" id="cd06571">
    <property type="entry name" value="Bac_DnaA_C"/>
    <property type="match status" value="1"/>
</dbReference>
<dbReference type="FunFam" id="3.40.50.300:FF:000668">
    <property type="entry name" value="Chromosomal replication initiator protein DnaA"/>
    <property type="match status" value="1"/>
</dbReference>
<dbReference type="Gene3D" id="1.10.1750.10">
    <property type="match status" value="1"/>
</dbReference>
<dbReference type="Gene3D" id="1.10.8.60">
    <property type="match status" value="1"/>
</dbReference>
<dbReference type="Gene3D" id="3.30.300.180">
    <property type="match status" value="1"/>
</dbReference>
<dbReference type="Gene3D" id="3.40.50.300">
    <property type="entry name" value="P-loop containing nucleotide triphosphate hydrolases"/>
    <property type="match status" value="1"/>
</dbReference>
<dbReference type="HAMAP" id="MF_00377">
    <property type="entry name" value="DnaA_bact"/>
    <property type="match status" value="1"/>
</dbReference>
<dbReference type="InterPro" id="IPR003593">
    <property type="entry name" value="AAA+_ATPase"/>
</dbReference>
<dbReference type="InterPro" id="IPR001957">
    <property type="entry name" value="Chromosome_initiator_DnaA"/>
</dbReference>
<dbReference type="InterPro" id="IPR020591">
    <property type="entry name" value="Chromosome_initiator_DnaA-like"/>
</dbReference>
<dbReference type="InterPro" id="IPR018312">
    <property type="entry name" value="Chromosome_initiator_DnaA_CS"/>
</dbReference>
<dbReference type="InterPro" id="IPR013159">
    <property type="entry name" value="DnaA_C"/>
</dbReference>
<dbReference type="InterPro" id="IPR013317">
    <property type="entry name" value="DnaA_dom"/>
</dbReference>
<dbReference type="InterPro" id="IPR024633">
    <property type="entry name" value="DnaA_N_dom"/>
</dbReference>
<dbReference type="InterPro" id="IPR038454">
    <property type="entry name" value="DnaA_N_sf"/>
</dbReference>
<dbReference type="InterPro" id="IPR027417">
    <property type="entry name" value="P-loop_NTPase"/>
</dbReference>
<dbReference type="InterPro" id="IPR010921">
    <property type="entry name" value="Trp_repressor/repl_initiator"/>
</dbReference>
<dbReference type="NCBIfam" id="TIGR00362">
    <property type="entry name" value="DnaA"/>
    <property type="match status" value="1"/>
</dbReference>
<dbReference type="PANTHER" id="PTHR30050">
    <property type="entry name" value="CHROMOSOMAL REPLICATION INITIATOR PROTEIN DNAA"/>
    <property type="match status" value="1"/>
</dbReference>
<dbReference type="PANTHER" id="PTHR30050:SF2">
    <property type="entry name" value="CHROMOSOMAL REPLICATION INITIATOR PROTEIN DNAA"/>
    <property type="match status" value="1"/>
</dbReference>
<dbReference type="Pfam" id="PF00308">
    <property type="entry name" value="Bac_DnaA"/>
    <property type="match status" value="1"/>
</dbReference>
<dbReference type="Pfam" id="PF08299">
    <property type="entry name" value="Bac_DnaA_C"/>
    <property type="match status" value="1"/>
</dbReference>
<dbReference type="Pfam" id="PF11638">
    <property type="entry name" value="DnaA_N"/>
    <property type="match status" value="1"/>
</dbReference>
<dbReference type="PRINTS" id="PR00051">
    <property type="entry name" value="DNAA"/>
</dbReference>
<dbReference type="SMART" id="SM00382">
    <property type="entry name" value="AAA"/>
    <property type="match status" value="1"/>
</dbReference>
<dbReference type="SMART" id="SM00760">
    <property type="entry name" value="Bac_DnaA_C"/>
    <property type="match status" value="1"/>
</dbReference>
<dbReference type="SUPFAM" id="SSF52540">
    <property type="entry name" value="P-loop containing nucleoside triphosphate hydrolases"/>
    <property type="match status" value="1"/>
</dbReference>
<dbReference type="SUPFAM" id="SSF48295">
    <property type="entry name" value="TrpR-like"/>
    <property type="match status" value="1"/>
</dbReference>
<dbReference type="PROSITE" id="PS01008">
    <property type="entry name" value="DNAA"/>
    <property type="match status" value="1"/>
</dbReference>
<sequence length="476" mass="54183">MSESSHVGLWNRCLEIIRDNVPESTYKTWFVPIVPLKYEDKTLIVQVPSQFFYEFLEDKFVDLLRKTLYKVIGDGTKLMYNVLVDKSSGATVNQESTTRSTAIPQSGLPRVDERKAPGLLRAPAVQDLDPHLNPNYNFETFIEGYSNKLSRSVAEAVAENPAKTVFNPLFLHGASGVGKTHLANAIGTRIKELYPDKRVLYVSAHLFQVQYTDSVRNNTTNDFINFYQTIDVLIIDDIQEFAGVTKTQNTFFHIFNHLHQNGKQLILTSDRAPVLLQGMEERLLTRFKWGMVAELEKPTVELRKNILRNKIHRDGLQFPSEVIDYIAENVNESVRDLEGIVISIMAHSTIYNKEIDLDLAQRIVRKVVRCETKAVTIDDIINVVCKHFDLESSAIHTKSRKREVVQARQVAMYLAKTHTDFSTSKIGKFIGNKDHATVLHACKTVKGQCEVDKGFRSDLENIETLLKKRNVSNGER</sequence>
<proteinExistence type="inferred from homology"/>
<name>DNAA_BACFR</name>
<organism>
    <name type="scientific">Bacteroides fragilis (strain YCH46)</name>
    <dbReference type="NCBI Taxonomy" id="295405"/>
    <lineage>
        <taxon>Bacteria</taxon>
        <taxon>Pseudomonadati</taxon>
        <taxon>Bacteroidota</taxon>
        <taxon>Bacteroidia</taxon>
        <taxon>Bacteroidales</taxon>
        <taxon>Bacteroidaceae</taxon>
        <taxon>Bacteroides</taxon>
    </lineage>
</organism>
<accession>Q64PL4</accession>
<feature type="chain" id="PRO_0000114128" description="Chromosomal replication initiator protein DnaA">
    <location>
        <begin position="1"/>
        <end position="476"/>
    </location>
</feature>
<feature type="region of interest" description="Domain I, interacts with DnaA modulators" evidence="1">
    <location>
        <begin position="1"/>
        <end position="87"/>
    </location>
</feature>
<feature type="region of interest" description="Domain II" evidence="1">
    <location>
        <begin position="87"/>
        <end position="130"/>
    </location>
</feature>
<feature type="region of interest" description="Domain III, AAA+ region" evidence="1">
    <location>
        <begin position="131"/>
        <end position="348"/>
    </location>
</feature>
<feature type="region of interest" description="Domain IV, binds dsDNA" evidence="1">
    <location>
        <begin position="349"/>
        <end position="476"/>
    </location>
</feature>
<feature type="binding site" evidence="1">
    <location>
        <position position="176"/>
    </location>
    <ligand>
        <name>ATP</name>
        <dbReference type="ChEBI" id="CHEBI:30616"/>
    </ligand>
</feature>
<feature type="binding site" evidence="1">
    <location>
        <position position="178"/>
    </location>
    <ligand>
        <name>ATP</name>
        <dbReference type="ChEBI" id="CHEBI:30616"/>
    </ligand>
</feature>
<feature type="binding site" evidence="1">
    <location>
        <position position="179"/>
    </location>
    <ligand>
        <name>ATP</name>
        <dbReference type="ChEBI" id="CHEBI:30616"/>
    </ligand>
</feature>
<feature type="binding site" evidence="1">
    <location>
        <position position="180"/>
    </location>
    <ligand>
        <name>ATP</name>
        <dbReference type="ChEBI" id="CHEBI:30616"/>
    </ligand>
</feature>
<evidence type="ECO:0000255" key="1">
    <source>
        <dbReference type="HAMAP-Rule" id="MF_00377"/>
    </source>
</evidence>